<reference key="1">
    <citation type="submission" date="2007-03" db="EMBL/GenBank/DDBJ databases">
        <title>Complete sequence of chromosome 1 of Burkholderia vietnamiensis G4.</title>
        <authorList>
            <consortium name="US DOE Joint Genome Institute"/>
            <person name="Copeland A."/>
            <person name="Lucas S."/>
            <person name="Lapidus A."/>
            <person name="Barry K."/>
            <person name="Detter J.C."/>
            <person name="Glavina del Rio T."/>
            <person name="Hammon N."/>
            <person name="Israni S."/>
            <person name="Dalin E."/>
            <person name="Tice H."/>
            <person name="Pitluck S."/>
            <person name="Chain P."/>
            <person name="Malfatti S."/>
            <person name="Shin M."/>
            <person name="Vergez L."/>
            <person name="Schmutz J."/>
            <person name="Larimer F."/>
            <person name="Land M."/>
            <person name="Hauser L."/>
            <person name="Kyrpides N."/>
            <person name="Tiedje J."/>
            <person name="Richardson P."/>
        </authorList>
    </citation>
    <scope>NUCLEOTIDE SEQUENCE [LARGE SCALE GENOMIC DNA]</scope>
    <source>
        <strain>G4 / LMG 22486</strain>
    </source>
</reference>
<organism>
    <name type="scientific">Burkholderia vietnamiensis (strain G4 / LMG 22486)</name>
    <name type="common">Burkholderia cepacia (strain R1808)</name>
    <dbReference type="NCBI Taxonomy" id="269482"/>
    <lineage>
        <taxon>Bacteria</taxon>
        <taxon>Pseudomonadati</taxon>
        <taxon>Pseudomonadota</taxon>
        <taxon>Betaproteobacteria</taxon>
        <taxon>Burkholderiales</taxon>
        <taxon>Burkholderiaceae</taxon>
        <taxon>Burkholderia</taxon>
        <taxon>Burkholderia cepacia complex</taxon>
    </lineage>
</organism>
<evidence type="ECO:0000255" key="1">
    <source>
        <dbReference type="HAMAP-Rule" id="MF_00176"/>
    </source>
</evidence>
<sequence length="433" mass="47619">MLDIQLLRKDLDGVAKRLADRGYTLDVAAFSALEAERRAIQTRTEELQARRNSLSKQIGAMKGKGEDTSAVMAEVGGIGDEMKASEVKLGEIQSRLSDLMLGMPNIAHESVPVGKDEADNVELRRWGTPRQFDFDVKDHVDVGTPLGLDFETGAKLAGARFTMLRGPIARLHRALAQFMLDTHTQLHGYSETYTPYIVNPEILYGTGQLPKFADDMFRVEKGGAENTITQYLISTSEISLTNTVRESIVDASALPIKLTAHSPCFRSEAGSYGRDTRGMIRQHQFDKVEMVQVVAPDTSYAALDEMVGHAEAILQKLGLPYRVITLCTGDMGFSAAKTFDLEVWLPAQNTYREISSCSNTEAFQARRMQARFRNAQGKPELVHTLNGSGLAVGRTLVAVLENYQNADGSVTVPEVLRPYMGGMERIDAPVQAS</sequence>
<gene>
    <name evidence="1" type="primary">serS</name>
    <name type="ordered locus">Bcep1808_0895</name>
</gene>
<accession>A4JCA3</accession>
<proteinExistence type="inferred from homology"/>
<comment type="function">
    <text evidence="1">Catalyzes the attachment of serine to tRNA(Ser). Is also able to aminoacylate tRNA(Sec) with serine, to form the misacylated tRNA L-seryl-tRNA(Sec), which will be further converted into selenocysteinyl-tRNA(Sec).</text>
</comment>
<comment type="catalytic activity">
    <reaction evidence="1">
        <text>tRNA(Ser) + L-serine + ATP = L-seryl-tRNA(Ser) + AMP + diphosphate + H(+)</text>
        <dbReference type="Rhea" id="RHEA:12292"/>
        <dbReference type="Rhea" id="RHEA-COMP:9669"/>
        <dbReference type="Rhea" id="RHEA-COMP:9703"/>
        <dbReference type="ChEBI" id="CHEBI:15378"/>
        <dbReference type="ChEBI" id="CHEBI:30616"/>
        <dbReference type="ChEBI" id="CHEBI:33019"/>
        <dbReference type="ChEBI" id="CHEBI:33384"/>
        <dbReference type="ChEBI" id="CHEBI:78442"/>
        <dbReference type="ChEBI" id="CHEBI:78533"/>
        <dbReference type="ChEBI" id="CHEBI:456215"/>
        <dbReference type="EC" id="6.1.1.11"/>
    </reaction>
</comment>
<comment type="catalytic activity">
    <reaction evidence="1">
        <text>tRNA(Sec) + L-serine + ATP = L-seryl-tRNA(Sec) + AMP + diphosphate + H(+)</text>
        <dbReference type="Rhea" id="RHEA:42580"/>
        <dbReference type="Rhea" id="RHEA-COMP:9742"/>
        <dbReference type="Rhea" id="RHEA-COMP:10128"/>
        <dbReference type="ChEBI" id="CHEBI:15378"/>
        <dbReference type="ChEBI" id="CHEBI:30616"/>
        <dbReference type="ChEBI" id="CHEBI:33019"/>
        <dbReference type="ChEBI" id="CHEBI:33384"/>
        <dbReference type="ChEBI" id="CHEBI:78442"/>
        <dbReference type="ChEBI" id="CHEBI:78533"/>
        <dbReference type="ChEBI" id="CHEBI:456215"/>
        <dbReference type="EC" id="6.1.1.11"/>
    </reaction>
</comment>
<comment type="pathway">
    <text evidence="1">Aminoacyl-tRNA biosynthesis; selenocysteinyl-tRNA(Sec) biosynthesis; L-seryl-tRNA(Sec) from L-serine and tRNA(Sec): step 1/1.</text>
</comment>
<comment type="subunit">
    <text evidence="1">Homodimer. The tRNA molecule binds across the dimer.</text>
</comment>
<comment type="subcellular location">
    <subcellularLocation>
        <location evidence="1">Cytoplasm</location>
    </subcellularLocation>
</comment>
<comment type="domain">
    <text evidence="1">Consists of two distinct domains, a catalytic core and a N-terminal extension that is involved in tRNA binding.</text>
</comment>
<comment type="similarity">
    <text evidence="1">Belongs to the class-II aminoacyl-tRNA synthetase family. Type-1 seryl-tRNA synthetase subfamily.</text>
</comment>
<dbReference type="EC" id="6.1.1.11" evidence="1"/>
<dbReference type="EMBL" id="CP000614">
    <property type="protein sequence ID" value="ABO53906.1"/>
    <property type="molecule type" value="Genomic_DNA"/>
</dbReference>
<dbReference type="SMR" id="A4JCA3"/>
<dbReference type="KEGG" id="bvi:Bcep1808_0895"/>
<dbReference type="eggNOG" id="COG0172">
    <property type="taxonomic scope" value="Bacteria"/>
</dbReference>
<dbReference type="HOGENOM" id="CLU_023797_1_1_4"/>
<dbReference type="UniPathway" id="UPA00906">
    <property type="reaction ID" value="UER00895"/>
</dbReference>
<dbReference type="Proteomes" id="UP000002287">
    <property type="component" value="Chromosome 1"/>
</dbReference>
<dbReference type="GO" id="GO:0005737">
    <property type="term" value="C:cytoplasm"/>
    <property type="evidence" value="ECO:0007669"/>
    <property type="project" value="UniProtKB-SubCell"/>
</dbReference>
<dbReference type="GO" id="GO:0005524">
    <property type="term" value="F:ATP binding"/>
    <property type="evidence" value="ECO:0007669"/>
    <property type="project" value="UniProtKB-UniRule"/>
</dbReference>
<dbReference type="GO" id="GO:0004828">
    <property type="term" value="F:serine-tRNA ligase activity"/>
    <property type="evidence" value="ECO:0007669"/>
    <property type="project" value="UniProtKB-UniRule"/>
</dbReference>
<dbReference type="GO" id="GO:0016260">
    <property type="term" value="P:selenocysteine biosynthetic process"/>
    <property type="evidence" value="ECO:0007669"/>
    <property type="project" value="UniProtKB-UniRule"/>
</dbReference>
<dbReference type="GO" id="GO:0006434">
    <property type="term" value="P:seryl-tRNA aminoacylation"/>
    <property type="evidence" value="ECO:0007669"/>
    <property type="project" value="UniProtKB-UniRule"/>
</dbReference>
<dbReference type="CDD" id="cd00770">
    <property type="entry name" value="SerRS_core"/>
    <property type="match status" value="1"/>
</dbReference>
<dbReference type="Gene3D" id="3.30.930.10">
    <property type="entry name" value="Bira Bifunctional Protein, Domain 2"/>
    <property type="match status" value="1"/>
</dbReference>
<dbReference type="Gene3D" id="1.10.287.40">
    <property type="entry name" value="Serine-tRNA synthetase, tRNA binding domain"/>
    <property type="match status" value="1"/>
</dbReference>
<dbReference type="HAMAP" id="MF_00176">
    <property type="entry name" value="Ser_tRNA_synth_type1"/>
    <property type="match status" value="1"/>
</dbReference>
<dbReference type="InterPro" id="IPR002314">
    <property type="entry name" value="aa-tRNA-synt_IIb"/>
</dbReference>
<dbReference type="InterPro" id="IPR006195">
    <property type="entry name" value="aa-tRNA-synth_II"/>
</dbReference>
<dbReference type="InterPro" id="IPR045864">
    <property type="entry name" value="aa-tRNA-synth_II/BPL/LPL"/>
</dbReference>
<dbReference type="InterPro" id="IPR002317">
    <property type="entry name" value="Ser-tRNA-ligase_type_1"/>
</dbReference>
<dbReference type="InterPro" id="IPR015866">
    <property type="entry name" value="Ser-tRNA-synth_1_N"/>
</dbReference>
<dbReference type="InterPro" id="IPR042103">
    <property type="entry name" value="SerRS_1_N_sf"/>
</dbReference>
<dbReference type="InterPro" id="IPR033729">
    <property type="entry name" value="SerRS_core"/>
</dbReference>
<dbReference type="InterPro" id="IPR010978">
    <property type="entry name" value="tRNA-bd_arm"/>
</dbReference>
<dbReference type="NCBIfam" id="TIGR00414">
    <property type="entry name" value="serS"/>
    <property type="match status" value="1"/>
</dbReference>
<dbReference type="PANTHER" id="PTHR43697:SF1">
    <property type="entry name" value="SERINE--TRNA LIGASE"/>
    <property type="match status" value="1"/>
</dbReference>
<dbReference type="PANTHER" id="PTHR43697">
    <property type="entry name" value="SERYL-TRNA SYNTHETASE"/>
    <property type="match status" value="1"/>
</dbReference>
<dbReference type="Pfam" id="PF02403">
    <property type="entry name" value="Seryl_tRNA_N"/>
    <property type="match status" value="1"/>
</dbReference>
<dbReference type="Pfam" id="PF00587">
    <property type="entry name" value="tRNA-synt_2b"/>
    <property type="match status" value="1"/>
</dbReference>
<dbReference type="PIRSF" id="PIRSF001529">
    <property type="entry name" value="Ser-tRNA-synth_IIa"/>
    <property type="match status" value="1"/>
</dbReference>
<dbReference type="PRINTS" id="PR00981">
    <property type="entry name" value="TRNASYNTHSER"/>
</dbReference>
<dbReference type="SUPFAM" id="SSF55681">
    <property type="entry name" value="Class II aaRS and biotin synthetases"/>
    <property type="match status" value="1"/>
</dbReference>
<dbReference type="SUPFAM" id="SSF46589">
    <property type="entry name" value="tRNA-binding arm"/>
    <property type="match status" value="1"/>
</dbReference>
<dbReference type="PROSITE" id="PS50862">
    <property type="entry name" value="AA_TRNA_LIGASE_II"/>
    <property type="match status" value="1"/>
</dbReference>
<protein>
    <recommendedName>
        <fullName evidence="1">Serine--tRNA ligase</fullName>
        <ecNumber evidence="1">6.1.1.11</ecNumber>
    </recommendedName>
    <alternativeName>
        <fullName evidence="1">Seryl-tRNA synthetase</fullName>
        <shortName evidence="1">SerRS</shortName>
    </alternativeName>
    <alternativeName>
        <fullName evidence="1">Seryl-tRNA(Ser/Sec) synthetase</fullName>
    </alternativeName>
</protein>
<feature type="chain" id="PRO_1000019637" description="Serine--tRNA ligase">
    <location>
        <begin position="1"/>
        <end position="433"/>
    </location>
</feature>
<feature type="binding site" evidence="1">
    <location>
        <begin position="235"/>
        <end position="237"/>
    </location>
    <ligand>
        <name>L-serine</name>
        <dbReference type="ChEBI" id="CHEBI:33384"/>
    </ligand>
</feature>
<feature type="binding site" evidence="1">
    <location>
        <begin position="266"/>
        <end position="268"/>
    </location>
    <ligand>
        <name>ATP</name>
        <dbReference type="ChEBI" id="CHEBI:30616"/>
    </ligand>
</feature>
<feature type="binding site" evidence="1">
    <location>
        <position position="289"/>
    </location>
    <ligand>
        <name>L-serine</name>
        <dbReference type="ChEBI" id="CHEBI:33384"/>
    </ligand>
</feature>
<feature type="binding site" evidence="1">
    <location>
        <begin position="353"/>
        <end position="356"/>
    </location>
    <ligand>
        <name>ATP</name>
        <dbReference type="ChEBI" id="CHEBI:30616"/>
    </ligand>
</feature>
<feature type="binding site" evidence="1">
    <location>
        <position position="388"/>
    </location>
    <ligand>
        <name>L-serine</name>
        <dbReference type="ChEBI" id="CHEBI:33384"/>
    </ligand>
</feature>
<keyword id="KW-0030">Aminoacyl-tRNA synthetase</keyword>
<keyword id="KW-0067">ATP-binding</keyword>
<keyword id="KW-0963">Cytoplasm</keyword>
<keyword id="KW-0436">Ligase</keyword>
<keyword id="KW-0547">Nucleotide-binding</keyword>
<keyword id="KW-0648">Protein biosynthesis</keyword>
<name>SYS_BURVG</name>